<proteinExistence type="inferred from homology"/>
<dbReference type="EC" id="7.1.1.-" evidence="1"/>
<dbReference type="EMBL" id="CP000875">
    <property type="protein sequence ID" value="ABX05718.1"/>
    <property type="molecule type" value="Genomic_DNA"/>
</dbReference>
<dbReference type="SMR" id="A9B4Z5"/>
<dbReference type="STRING" id="316274.Haur_3080"/>
<dbReference type="KEGG" id="hau:Haur_3080"/>
<dbReference type="eggNOG" id="COG0377">
    <property type="taxonomic scope" value="Bacteria"/>
</dbReference>
<dbReference type="HOGENOM" id="CLU_055737_7_3_0"/>
<dbReference type="InParanoid" id="A9B4Z5"/>
<dbReference type="Proteomes" id="UP000000787">
    <property type="component" value="Chromosome"/>
</dbReference>
<dbReference type="GO" id="GO:0005886">
    <property type="term" value="C:plasma membrane"/>
    <property type="evidence" value="ECO:0007669"/>
    <property type="project" value="UniProtKB-SubCell"/>
</dbReference>
<dbReference type="GO" id="GO:0045271">
    <property type="term" value="C:respiratory chain complex I"/>
    <property type="evidence" value="ECO:0007669"/>
    <property type="project" value="TreeGrafter"/>
</dbReference>
<dbReference type="GO" id="GO:0051539">
    <property type="term" value="F:4 iron, 4 sulfur cluster binding"/>
    <property type="evidence" value="ECO:0007669"/>
    <property type="project" value="UniProtKB-KW"/>
</dbReference>
<dbReference type="GO" id="GO:0005506">
    <property type="term" value="F:iron ion binding"/>
    <property type="evidence" value="ECO:0007669"/>
    <property type="project" value="UniProtKB-UniRule"/>
</dbReference>
<dbReference type="GO" id="GO:0008137">
    <property type="term" value="F:NADH dehydrogenase (ubiquinone) activity"/>
    <property type="evidence" value="ECO:0007669"/>
    <property type="project" value="InterPro"/>
</dbReference>
<dbReference type="GO" id="GO:0050136">
    <property type="term" value="F:NADH:ubiquinone reductase (non-electrogenic) activity"/>
    <property type="evidence" value="ECO:0007669"/>
    <property type="project" value="UniProtKB-UniRule"/>
</dbReference>
<dbReference type="GO" id="GO:0048038">
    <property type="term" value="F:quinone binding"/>
    <property type="evidence" value="ECO:0007669"/>
    <property type="project" value="UniProtKB-KW"/>
</dbReference>
<dbReference type="GO" id="GO:0009060">
    <property type="term" value="P:aerobic respiration"/>
    <property type="evidence" value="ECO:0007669"/>
    <property type="project" value="TreeGrafter"/>
</dbReference>
<dbReference type="GO" id="GO:0015990">
    <property type="term" value="P:electron transport coupled proton transport"/>
    <property type="evidence" value="ECO:0007669"/>
    <property type="project" value="TreeGrafter"/>
</dbReference>
<dbReference type="FunFam" id="3.40.50.12280:FF:000004">
    <property type="entry name" value="NADH-quinone oxidoreductase subunit B"/>
    <property type="match status" value="1"/>
</dbReference>
<dbReference type="Gene3D" id="3.40.50.12280">
    <property type="match status" value="1"/>
</dbReference>
<dbReference type="HAMAP" id="MF_01356">
    <property type="entry name" value="NDH1_NuoB"/>
    <property type="match status" value="1"/>
</dbReference>
<dbReference type="InterPro" id="IPR006137">
    <property type="entry name" value="NADH_UbQ_OxRdtase-like_20kDa"/>
</dbReference>
<dbReference type="InterPro" id="IPR006138">
    <property type="entry name" value="NADH_UQ_OxRdtase_20Kd_su"/>
</dbReference>
<dbReference type="NCBIfam" id="TIGR01957">
    <property type="entry name" value="nuoB_fam"/>
    <property type="match status" value="1"/>
</dbReference>
<dbReference type="NCBIfam" id="NF005012">
    <property type="entry name" value="PRK06411.1"/>
    <property type="match status" value="1"/>
</dbReference>
<dbReference type="PANTHER" id="PTHR11995">
    <property type="entry name" value="NADH DEHYDROGENASE"/>
    <property type="match status" value="1"/>
</dbReference>
<dbReference type="PANTHER" id="PTHR11995:SF14">
    <property type="entry name" value="NADH DEHYDROGENASE [UBIQUINONE] IRON-SULFUR PROTEIN 7, MITOCHONDRIAL"/>
    <property type="match status" value="1"/>
</dbReference>
<dbReference type="Pfam" id="PF01058">
    <property type="entry name" value="Oxidored_q6"/>
    <property type="match status" value="1"/>
</dbReference>
<dbReference type="SUPFAM" id="SSF56770">
    <property type="entry name" value="HydA/Nqo6-like"/>
    <property type="match status" value="1"/>
</dbReference>
<organism>
    <name type="scientific">Herpetosiphon aurantiacus (strain ATCC 23779 / DSM 785 / 114-95)</name>
    <dbReference type="NCBI Taxonomy" id="316274"/>
    <lineage>
        <taxon>Bacteria</taxon>
        <taxon>Bacillati</taxon>
        <taxon>Chloroflexota</taxon>
        <taxon>Chloroflexia</taxon>
        <taxon>Herpetosiphonales</taxon>
        <taxon>Herpetosiphonaceae</taxon>
        <taxon>Herpetosiphon</taxon>
    </lineage>
</organism>
<protein>
    <recommendedName>
        <fullName evidence="1">NADH-quinone oxidoreductase subunit B 1</fullName>
        <ecNumber evidence="1">7.1.1.-</ecNumber>
    </recommendedName>
    <alternativeName>
        <fullName evidence="1">NADH dehydrogenase I subunit B 1</fullName>
    </alternativeName>
    <alternativeName>
        <fullName evidence="1">NDH-1 subunit B 1</fullName>
    </alternativeName>
</protein>
<reference key="1">
    <citation type="journal article" date="2011" name="Stand. Genomic Sci.">
        <title>Complete genome sequence of the filamentous gliding predatory bacterium Herpetosiphon aurantiacus type strain (114-95(T)).</title>
        <authorList>
            <person name="Kiss H."/>
            <person name="Nett M."/>
            <person name="Domin N."/>
            <person name="Martin K."/>
            <person name="Maresca J.A."/>
            <person name="Copeland A."/>
            <person name="Lapidus A."/>
            <person name="Lucas S."/>
            <person name="Berry K.W."/>
            <person name="Glavina Del Rio T."/>
            <person name="Dalin E."/>
            <person name="Tice H."/>
            <person name="Pitluck S."/>
            <person name="Richardson P."/>
            <person name="Bruce D."/>
            <person name="Goodwin L."/>
            <person name="Han C."/>
            <person name="Detter J.C."/>
            <person name="Schmutz J."/>
            <person name="Brettin T."/>
            <person name="Land M."/>
            <person name="Hauser L."/>
            <person name="Kyrpides N.C."/>
            <person name="Ivanova N."/>
            <person name="Goeker M."/>
            <person name="Woyke T."/>
            <person name="Klenk H.P."/>
            <person name="Bryant D.A."/>
        </authorList>
    </citation>
    <scope>NUCLEOTIDE SEQUENCE [LARGE SCALE GENOMIC DNA]</scope>
    <source>
        <strain>ATCC 23779 / DSM 785 / 114-95</strain>
    </source>
</reference>
<feature type="chain" id="PRO_0000376254" description="NADH-quinone oxidoreductase subunit B 1">
    <location>
        <begin position="1"/>
        <end position="179"/>
    </location>
</feature>
<feature type="binding site" evidence="1">
    <location>
        <position position="38"/>
    </location>
    <ligand>
        <name>[4Fe-4S] cluster</name>
        <dbReference type="ChEBI" id="CHEBI:49883"/>
    </ligand>
</feature>
<feature type="binding site" evidence="1">
    <location>
        <position position="39"/>
    </location>
    <ligand>
        <name>[4Fe-4S] cluster</name>
        <dbReference type="ChEBI" id="CHEBI:49883"/>
    </ligand>
</feature>
<feature type="binding site" evidence="1">
    <location>
        <position position="104"/>
    </location>
    <ligand>
        <name>[4Fe-4S] cluster</name>
        <dbReference type="ChEBI" id="CHEBI:49883"/>
    </ligand>
</feature>
<feature type="binding site" evidence="1">
    <location>
        <position position="133"/>
    </location>
    <ligand>
        <name>[4Fe-4S] cluster</name>
        <dbReference type="ChEBI" id="CHEBI:49883"/>
    </ligand>
</feature>
<comment type="function">
    <text evidence="1">NDH-1 shuttles electrons from NADH, via FMN and iron-sulfur (Fe-S) centers, to quinones in the respiratory chain. The immediate electron acceptor for the enzyme in this species is believed to be ubiquinone. Couples the redox reaction to proton translocation (for every two electrons transferred, four hydrogen ions are translocated across the cytoplasmic membrane), and thus conserves the redox energy in a proton gradient.</text>
</comment>
<comment type="catalytic activity">
    <reaction evidence="1">
        <text>a quinone + NADH + 5 H(+)(in) = a quinol + NAD(+) + 4 H(+)(out)</text>
        <dbReference type="Rhea" id="RHEA:57888"/>
        <dbReference type="ChEBI" id="CHEBI:15378"/>
        <dbReference type="ChEBI" id="CHEBI:24646"/>
        <dbReference type="ChEBI" id="CHEBI:57540"/>
        <dbReference type="ChEBI" id="CHEBI:57945"/>
        <dbReference type="ChEBI" id="CHEBI:132124"/>
    </reaction>
</comment>
<comment type="cofactor">
    <cofactor evidence="1">
        <name>[4Fe-4S] cluster</name>
        <dbReference type="ChEBI" id="CHEBI:49883"/>
    </cofactor>
    <text evidence="1">Binds 1 [4Fe-4S] cluster.</text>
</comment>
<comment type="subunit">
    <text evidence="1">NDH-1 is composed of 14 different subunits. Subunits NuoB, C, D, E, F, and G constitute the peripheral sector of the complex.</text>
</comment>
<comment type="subcellular location">
    <subcellularLocation>
        <location evidence="1">Cell membrane</location>
        <topology evidence="1">Peripheral membrane protein</topology>
        <orientation evidence="1">Cytoplasmic side</orientation>
    </subcellularLocation>
</comment>
<comment type="similarity">
    <text evidence="1">Belongs to the complex I 20 kDa subunit family.</text>
</comment>
<gene>
    <name evidence="1" type="primary">nuoB1</name>
    <name type="ordered locus">Haur_3080</name>
</gene>
<accession>A9B4Z5</accession>
<keyword id="KW-0004">4Fe-4S</keyword>
<keyword id="KW-1003">Cell membrane</keyword>
<keyword id="KW-0408">Iron</keyword>
<keyword id="KW-0411">Iron-sulfur</keyword>
<keyword id="KW-0472">Membrane</keyword>
<keyword id="KW-0479">Metal-binding</keyword>
<keyword id="KW-0520">NAD</keyword>
<keyword id="KW-0874">Quinone</keyword>
<keyword id="KW-1278">Translocase</keyword>
<keyword id="KW-0813">Transport</keyword>
<keyword id="KW-0830">Ubiquinone</keyword>
<name>NUOB1_HERA2</name>
<sequence length="179" mass="19604">MGLEEKAGDLGIVTTTLEGVVNWGRTKAMWPMLFGLACCAIEMMAGQASNYDMSRFGLELMRASPRQADLMIVAGRVSRKMAPVLRRLYDQMPEPKWVVAMGDCASCGGVYNNYAIVQGVDEIVPVDVYVAGCPPRPEALIDGILQLHEKIKRDKITDHADGKPIRIEQAERGALKPLG</sequence>
<evidence type="ECO:0000255" key="1">
    <source>
        <dbReference type="HAMAP-Rule" id="MF_01356"/>
    </source>
</evidence>